<organism>
    <name type="scientific">Rhodococcus jostii (strain RHA1)</name>
    <dbReference type="NCBI Taxonomy" id="101510"/>
    <lineage>
        <taxon>Bacteria</taxon>
        <taxon>Bacillati</taxon>
        <taxon>Actinomycetota</taxon>
        <taxon>Actinomycetes</taxon>
        <taxon>Mycobacteriales</taxon>
        <taxon>Nocardiaceae</taxon>
        <taxon>Rhodococcus</taxon>
    </lineage>
</organism>
<accession>Q0SK28</accession>
<sequence length="245" mass="27043">MPATNLVGLDLVGIGHRYRDTTVLHDIDLTVEPGEFVSFLGPSGVGKSTLLRIIAGLEQPTHGVVESTGGTSGGTMSRMMFQEDRLLPWRNVLDNVQLGTRHQRERALELLYDVGLAGREKDWPSELSGGQRQRVALARALLHQPDVLLLDEPFGALDAITRVAMQQLLERVLAEQPRTVLLVTHDVEEALVLSDRVLLLTDQGITRDLRIPHARPRHRGDAQLAAWKEELLDGLLQADNALSSL</sequence>
<proteinExistence type="inferred from homology"/>
<feature type="chain" id="PRO_0000279954" description="Aliphatic sulfonates import ATP-binding protein SsuB 1">
    <location>
        <begin position="1"/>
        <end position="245"/>
    </location>
</feature>
<feature type="domain" description="ABC transporter" evidence="1">
    <location>
        <begin position="9"/>
        <end position="227"/>
    </location>
</feature>
<feature type="binding site" evidence="1">
    <location>
        <begin position="41"/>
        <end position="48"/>
    </location>
    <ligand>
        <name>ATP</name>
        <dbReference type="ChEBI" id="CHEBI:30616"/>
    </ligand>
</feature>
<keyword id="KW-0067">ATP-binding</keyword>
<keyword id="KW-1003">Cell membrane</keyword>
<keyword id="KW-0472">Membrane</keyword>
<keyword id="KW-0547">Nucleotide-binding</keyword>
<keyword id="KW-1278">Translocase</keyword>
<keyword id="KW-0813">Transport</keyword>
<name>SSUB1_RHOJR</name>
<evidence type="ECO:0000255" key="1">
    <source>
        <dbReference type="HAMAP-Rule" id="MF_01724"/>
    </source>
</evidence>
<reference key="1">
    <citation type="journal article" date="2006" name="Proc. Natl. Acad. Sci. U.S.A.">
        <title>The complete genome of Rhodococcus sp. RHA1 provides insights into a catabolic powerhouse.</title>
        <authorList>
            <person name="McLeod M.P."/>
            <person name="Warren R.L."/>
            <person name="Hsiao W.W.L."/>
            <person name="Araki N."/>
            <person name="Myhre M."/>
            <person name="Fernandes C."/>
            <person name="Miyazawa D."/>
            <person name="Wong W."/>
            <person name="Lillquist A.L."/>
            <person name="Wang D."/>
            <person name="Dosanjh M."/>
            <person name="Hara H."/>
            <person name="Petrescu A."/>
            <person name="Morin R.D."/>
            <person name="Yang G."/>
            <person name="Stott J.M."/>
            <person name="Schein J.E."/>
            <person name="Shin H."/>
            <person name="Smailus D."/>
            <person name="Siddiqui A.S."/>
            <person name="Marra M.A."/>
            <person name="Jones S.J.M."/>
            <person name="Holt R."/>
            <person name="Brinkman F.S.L."/>
            <person name="Miyauchi K."/>
            <person name="Fukuda M."/>
            <person name="Davies J.E."/>
            <person name="Mohn W.W."/>
            <person name="Eltis L.D."/>
        </authorList>
    </citation>
    <scope>NUCLEOTIDE SEQUENCE [LARGE SCALE GENOMIC DNA]</scope>
    <source>
        <strain>RHA1</strain>
    </source>
</reference>
<comment type="function">
    <text evidence="1">Part of the ABC transporter complex SsuABC involved in aliphatic sulfonates import. Responsible for energy coupling to the transport system.</text>
</comment>
<comment type="catalytic activity">
    <reaction evidence="1">
        <text>ATP + H2O + aliphatic sulfonate-[sulfonate-binding protein]Side 1 = ADP + phosphate + aliphatic sulfonateSide 2 + [sulfonate-binding protein]Side 1.</text>
        <dbReference type="EC" id="7.6.2.14"/>
    </reaction>
</comment>
<comment type="subunit">
    <text evidence="1">The complex is composed of two ATP-binding proteins (SsuB), two transmembrane proteins (SsuC) and a solute-binding protein (SsuA).</text>
</comment>
<comment type="subcellular location">
    <subcellularLocation>
        <location evidence="1">Cell membrane</location>
        <topology evidence="1">Peripheral membrane protein</topology>
    </subcellularLocation>
</comment>
<comment type="similarity">
    <text evidence="1">Belongs to the ABC transporter superfamily. Aliphatic sulfonates importer (TC 3.A.1.17.2) family.</text>
</comment>
<dbReference type="EC" id="7.6.2.14" evidence="1"/>
<dbReference type="EMBL" id="CP000431">
    <property type="protein sequence ID" value="ABG92108.1"/>
    <property type="molecule type" value="Genomic_DNA"/>
</dbReference>
<dbReference type="RefSeq" id="WP_011593561.1">
    <property type="nucleotide sequence ID" value="NC_008268.1"/>
</dbReference>
<dbReference type="SMR" id="Q0SK28"/>
<dbReference type="KEGG" id="rha:RHA1_ro00272"/>
<dbReference type="PATRIC" id="fig|101510.16.peg.300"/>
<dbReference type="eggNOG" id="COG1116">
    <property type="taxonomic scope" value="Bacteria"/>
</dbReference>
<dbReference type="HOGENOM" id="CLU_000604_1_22_11"/>
<dbReference type="OrthoDB" id="8773773at2"/>
<dbReference type="Proteomes" id="UP000008710">
    <property type="component" value="Chromosome"/>
</dbReference>
<dbReference type="GO" id="GO:0005886">
    <property type="term" value="C:plasma membrane"/>
    <property type="evidence" value="ECO:0007669"/>
    <property type="project" value="UniProtKB-SubCell"/>
</dbReference>
<dbReference type="GO" id="GO:0005524">
    <property type="term" value="F:ATP binding"/>
    <property type="evidence" value="ECO:0007669"/>
    <property type="project" value="UniProtKB-KW"/>
</dbReference>
<dbReference type="GO" id="GO:0016887">
    <property type="term" value="F:ATP hydrolysis activity"/>
    <property type="evidence" value="ECO:0007669"/>
    <property type="project" value="InterPro"/>
</dbReference>
<dbReference type="CDD" id="cd03293">
    <property type="entry name" value="ABC_NrtD_SsuB_transporters"/>
    <property type="match status" value="1"/>
</dbReference>
<dbReference type="Gene3D" id="3.40.50.300">
    <property type="entry name" value="P-loop containing nucleotide triphosphate hydrolases"/>
    <property type="match status" value="1"/>
</dbReference>
<dbReference type="InterPro" id="IPR003593">
    <property type="entry name" value="AAA+_ATPase"/>
</dbReference>
<dbReference type="InterPro" id="IPR003439">
    <property type="entry name" value="ABC_transporter-like_ATP-bd"/>
</dbReference>
<dbReference type="InterPro" id="IPR017871">
    <property type="entry name" value="ABC_transporter-like_CS"/>
</dbReference>
<dbReference type="InterPro" id="IPR050166">
    <property type="entry name" value="ABC_transporter_ATP-bind"/>
</dbReference>
<dbReference type="InterPro" id="IPR027417">
    <property type="entry name" value="P-loop_NTPase"/>
</dbReference>
<dbReference type="PANTHER" id="PTHR42788:SF17">
    <property type="entry name" value="ALIPHATIC SULFONATES IMPORT ATP-BINDING PROTEIN SSUB"/>
    <property type="match status" value="1"/>
</dbReference>
<dbReference type="PANTHER" id="PTHR42788">
    <property type="entry name" value="TAURINE IMPORT ATP-BINDING PROTEIN-RELATED"/>
    <property type="match status" value="1"/>
</dbReference>
<dbReference type="Pfam" id="PF00005">
    <property type="entry name" value="ABC_tran"/>
    <property type="match status" value="1"/>
</dbReference>
<dbReference type="SMART" id="SM00382">
    <property type="entry name" value="AAA"/>
    <property type="match status" value="1"/>
</dbReference>
<dbReference type="SUPFAM" id="SSF52540">
    <property type="entry name" value="P-loop containing nucleoside triphosphate hydrolases"/>
    <property type="match status" value="1"/>
</dbReference>
<dbReference type="PROSITE" id="PS00211">
    <property type="entry name" value="ABC_TRANSPORTER_1"/>
    <property type="match status" value="1"/>
</dbReference>
<dbReference type="PROSITE" id="PS50893">
    <property type="entry name" value="ABC_TRANSPORTER_2"/>
    <property type="match status" value="1"/>
</dbReference>
<dbReference type="PROSITE" id="PS51291">
    <property type="entry name" value="SSUB"/>
    <property type="match status" value="1"/>
</dbReference>
<protein>
    <recommendedName>
        <fullName evidence="1">Aliphatic sulfonates import ATP-binding protein SsuB 1</fullName>
        <ecNumber evidence="1">7.6.2.14</ecNumber>
    </recommendedName>
</protein>
<gene>
    <name evidence="1" type="primary">ssuB1</name>
    <name type="ordered locus">RHA1_ro00272</name>
</gene>